<dbReference type="EMBL" id="AB781089">
    <property type="status" value="NOT_ANNOTATED_CDS"/>
    <property type="molecule type" value="Genomic_DNA"/>
</dbReference>
<dbReference type="Proteomes" id="UP000817156">
    <property type="component" value="Segment"/>
</dbReference>
<dbReference type="GO" id="GO:0042025">
    <property type="term" value="C:host cell nucleus"/>
    <property type="evidence" value="ECO:0007669"/>
    <property type="project" value="UniProtKB-SubCell"/>
</dbReference>
<dbReference type="GO" id="GO:0003723">
    <property type="term" value="F:RNA binding"/>
    <property type="evidence" value="ECO:0007669"/>
    <property type="project" value="InterPro"/>
</dbReference>
<dbReference type="GO" id="GO:0003724">
    <property type="term" value="F:RNA helicase activity"/>
    <property type="evidence" value="ECO:0007669"/>
    <property type="project" value="InterPro"/>
</dbReference>
<dbReference type="Gene3D" id="3.40.1310.20">
    <property type="match status" value="1"/>
</dbReference>
<dbReference type="Gene3D" id="3.40.50.300">
    <property type="entry name" value="P-loop containing nucleotide triphosphate hydrolases"/>
    <property type="match status" value="1"/>
</dbReference>
<dbReference type="InterPro" id="IPR000605">
    <property type="entry name" value="Helicase_SF3_ssDNA/RNA_vir"/>
</dbReference>
<dbReference type="InterPro" id="IPR027417">
    <property type="entry name" value="P-loop_NTPase"/>
</dbReference>
<dbReference type="Pfam" id="PF00910">
    <property type="entry name" value="RNA_helicase"/>
    <property type="match status" value="1"/>
</dbReference>
<dbReference type="SUPFAM" id="SSF52540">
    <property type="entry name" value="P-loop containing nucleoside triphosphate hydrolases"/>
    <property type="match status" value="1"/>
</dbReference>
<reference key="1">
    <citation type="journal article" date="2013" name="Sci. Rep.">
        <title>New single-stranded DNA virus with a unique genomic structure that infects marine diatom Chaetoceros setoensis.</title>
        <authorList>
            <person name="Tomaru Y."/>
            <person name="Toyoda K."/>
            <person name="Suzuki H."/>
            <person name="Nagumo T."/>
            <person name="Kimura K."/>
            <person name="Takao Y."/>
        </authorList>
    </citation>
    <scope>NUCLEOTIDE SEQUENCE [LARGE SCALE GENOMIC DNA]</scope>
</reference>
<accession>P0DOK4</accession>
<keyword id="KW-1048">Host nucleus</keyword>
<keyword id="KW-1185">Reference proteome</keyword>
<proteinExistence type="predicted"/>
<evidence type="ECO:0000256" key="1">
    <source>
        <dbReference type="SAM" id="MobiDB-lite"/>
    </source>
</evidence>
<evidence type="ECO:0000303" key="2">
    <source>
    </source>
</evidence>
<evidence type="ECO:0000305" key="3"/>
<comment type="function">
    <text evidence="2 3">Plays an essential for the replication of viral DNA. Presumably cleaves viral genomic dsRNA replicative form to initiate rolling circle replication.</text>
</comment>
<comment type="subcellular location">
    <subcellularLocation>
        <location evidence="3">Host nucleus</location>
    </subcellularLocation>
</comment>
<name>REP_CDDV1</name>
<organism>
    <name type="scientific">Chaetoceros diatodnavirus 1</name>
    <name type="common">Chaetoceros setoense DNA virus</name>
    <dbReference type="NCBI Taxonomy" id="1290581"/>
    <lineage>
        <taxon>Viruses</taxon>
        <taxon>Monodnaviria</taxon>
        <taxon>Shotokuvirae</taxon>
        <taxon>Cressdnaviricota</taxon>
        <taxon>Arfiviricetes</taxon>
        <taxon>Baphyvirales</taxon>
        <taxon>Bacilladnaviridae</taxon>
        <taxon>Diatodnavirus</taxon>
        <taxon>Diatodnavirus chaese</taxon>
    </lineage>
</organism>
<protein>
    <recommendedName>
        <fullName>Replication-associated protein</fullName>
        <shortName>Rep</shortName>
    </recommendedName>
</protein>
<sequence length="488" mass="55619">MTDNDYPFDMLSQLSRLSQMSGIEDIIIETQPQESISDLNMIDSEAASVASVTNDRTLMRRCIVTLFFNDTAENLADWALDPASYFNEPEKDIKEWVGQFELCPTTNHLHAHIHVHFARQMRFQFIRDQFSAVSQIKLGDIKKGRGTSKHAVQCAVNYCIDPRKRHPEEPFNEAYLWPGNKTKWEFDQACADKQTKKKPTKEQLVKDKIALVDSFPYHWTWDQIVHSSDEAKELFFGCSASERYHKTRAVVQARRVIESVEIHYGAGGTGKSTFARQLGTKLGETSGRDEKYTRNYDDGNFWGGGITKYAGEAVVHLEEFEGQETLSKFKDICELGASGPNVNVKNGGTTLNHSHVVITSNTHPAGFYKGVWKGDPKQFAPFWRRITKLVFYPAHLPDGSLNAPKCDEDVYSIDQTEEWKALQGNYEGCLKMAERDWALRDDDLDSNKRPFDDAFSEGFVLPRPRQMQRSATEHNLFQYARSGRDPTS</sequence>
<organismHost>
    <name type="scientific">Chaetoceros setoense</name>
    <dbReference type="NCBI Taxonomy" id="1290580"/>
</organismHost>
<feature type="chain" id="PRO_0000445652" description="Replication-associated protein">
    <location>
        <begin position="1"/>
        <end position="488"/>
    </location>
</feature>
<feature type="region of interest" description="Disordered" evidence="1">
    <location>
        <begin position="462"/>
        <end position="488"/>
    </location>
</feature>